<accession>P33746</accession>
<reference key="1">
    <citation type="journal article" date="1993" name="J. Bacteriol.">
        <title>Cloning, sequencing, and molecular analysis of the sol operon of Clostridium acetobutylicum, a chromosomal locus involved in solventogenesis.</title>
        <authorList>
            <person name="Fischer R.J."/>
            <person name="Helms J."/>
            <person name="Duerre P."/>
        </authorList>
    </citation>
    <scope>NUCLEOTIDE SEQUENCE [GENOMIC DNA]</scope>
    <source>
        <strain>ATCC 824 / DSM 792 / JCM 1419 / IAM 19013 / LMG 5710 / NBRC 13948 / NRRL B-527 / VKM B-1787 / 2291 / W</strain>
    </source>
</reference>
<reference key="2">
    <citation type="journal article" date="1999" name="J. Bacteriol.">
        <title>Regulation of the sol locus genes for butanol and acetone formation in Clostridium acetobutylicum ATCC 824 by a putative transcriptional repressor.</title>
        <authorList>
            <person name="Nair R.V."/>
            <person name="Green E.M."/>
            <person name="Watson D.E."/>
            <person name="Bennett G.N."/>
            <person name="Papoutsakis E.T."/>
        </authorList>
    </citation>
    <scope>NUCLEOTIDE SEQUENCE [GENOMIC DNA]</scope>
    <source>
        <strain>ATCC 824 / DSM 792 / JCM 1419 / IAM 19013 / LMG 5710 / NBRC 13948 / NRRL B-527 / VKM B-1787 / 2291 / W</strain>
    </source>
</reference>
<reference key="3">
    <citation type="journal article" date="2001" name="J. Bacteriol.">
        <title>Genome sequence and comparative analysis of the solvent-producing bacterium Clostridium acetobutylicum.</title>
        <authorList>
            <person name="Noelling J."/>
            <person name="Breton G."/>
            <person name="Omelchenko M.V."/>
            <person name="Makarova K.S."/>
            <person name="Zeng Q."/>
            <person name="Gibson R."/>
            <person name="Lee H.M."/>
            <person name="Dubois J."/>
            <person name="Qiu D."/>
            <person name="Hitti J."/>
            <person name="Wolf Y.I."/>
            <person name="Tatusov R.L."/>
            <person name="Sabathe F."/>
            <person name="Doucette-Stamm L.A."/>
            <person name="Soucaille P."/>
            <person name="Daly M.J."/>
            <person name="Bennett G.N."/>
            <person name="Koonin E.V."/>
            <person name="Smith D.R."/>
        </authorList>
    </citation>
    <scope>NUCLEOTIDE SEQUENCE [LARGE SCALE GENOMIC DNA]</scope>
    <source>
        <strain>ATCC 824 / DSM 792 / JCM 1419 / IAM 19013 / LMG 5710 / NBRC 13948 / NRRL B-527 / VKM B-1787 / 2291 / W</strain>
    </source>
</reference>
<geneLocation type="plasmid">
    <name>pSOL1</name>
</geneLocation>
<protein>
    <recommendedName>
        <fullName>Sol locus transcriptional repressor</fullName>
    </recommendedName>
</protein>
<proteinExistence type="predicted"/>
<gene>
    <name type="primary">solR</name>
    <name type="ordered locus">CA_P0161</name>
</gene>
<sequence length="318" mass="36940">MNLLNLFTYVIPIAICIILPIFIIVTHFQIKSLNKAVTSFNKGDRSNALEILSKLVKSPIKNVKANAYITRERIYFYSRDFELSLRDLLQAIKLRPKTINDVYSFALSYHILGEPERALKYFLRAVELQPNVGISYENLAWFYYLTGKYDKAIENFEKAISMGSTNSVYRSLGITYAKIGDYKKSEEYLKKALDAEPEKPSTHIYFSYLKRKTNDIKLAKEYALKAIELNKNNFDGYKNLAEVNLAEDDYDGFYKNLEIFLEKINFVTNGEDFNDEVYDKVKDNEKFKELIAKTKVIKFKDLGIEIDDKKILNGKFLV</sequence>
<name>SOLR_CLOAB</name>
<dbReference type="EMBL" id="X72831">
    <property type="protein sequence ID" value="CAA51342.1"/>
    <property type="molecule type" value="Genomic_DNA"/>
</dbReference>
<dbReference type="EMBL" id="L14817">
    <property type="protein sequence ID" value="AAD04637.1"/>
    <property type="molecule type" value="Genomic_DNA"/>
</dbReference>
<dbReference type="EMBL" id="AE001438">
    <property type="protein sequence ID" value="AAK76906.1"/>
    <property type="molecule type" value="Genomic_DNA"/>
</dbReference>
<dbReference type="PIR" id="B36972">
    <property type="entry name" value="B36972"/>
</dbReference>
<dbReference type="PIR" id="S33433">
    <property type="entry name" value="S33433"/>
</dbReference>
<dbReference type="RefSeq" id="NP_149324.1">
    <property type="nucleotide sequence ID" value="NC_001988.2"/>
</dbReference>
<dbReference type="RefSeq" id="WP_010890845.1">
    <property type="nucleotide sequence ID" value="NC_001988.2"/>
</dbReference>
<dbReference type="SMR" id="P33746"/>
<dbReference type="GeneID" id="45000386"/>
<dbReference type="KEGG" id="cac:CA_P0161"/>
<dbReference type="PATRIC" id="fig|272562.8.peg.161"/>
<dbReference type="HOGENOM" id="CLU_873457_0_0_9"/>
<dbReference type="OrthoDB" id="600613at2"/>
<dbReference type="Proteomes" id="UP000000814">
    <property type="component" value="Plasmid pSOL1"/>
</dbReference>
<dbReference type="Gene3D" id="1.25.40.10">
    <property type="entry name" value="Tetratricopeptide repeat domain"/>
    <property type="match status" value="1"/>
</dbReference>
<dbReference type="InterPro" id="IPR011990">
    <property type="entry name" value="TPR-like_helical_dom_sf"/>
</dbReference>
<dbReference type="InterPro" id="IPR019734">
    <property type="entry name" value="TPR_rpt"/>
</dbReference>
<dbReference type="InterPro" id="IPR050498">
    <property type="entry name" value="Ycf3"/>
</dbReference>
<dbReference type="PANTHER" id="PTHR44858">
    <property type="entry name" value="TETRATRICOPEPTIDE REPEAT PROTEIN 6"/>
    <property type="match status" value="1"/>
</dbReference>
<dbReference type="PANTHER" id="PTHR44858:SF1">
    <property type="entry name" value="UDP-N-ACETYLGLUCOSAMINE--PEPTIDE N-ACETYLGLUCOSAMINYLTRANSFERASE SPINDLY-RELATED"/>
    <property type="match status" value="1"/>
</dbReference>
<dbReference type="Pfam" id="PF13424">
    <property type="entry name" value="TPR_12"/>
    <property type="match status" value="1"/>
</dbReference>
<dbReference type="Pfam" id="PF13181">
    <property type="entry name" value="TPR_8"/>
    <property type="match status" value="2"/>
</dbReference>
<dbReference type="SMART" id="SM00028">
    <property type="entry name" value="TPR"/>
    <property type="match status" value="5"/>
</dbReference>
<dbReference type="SUPFAM" id="SSF81901">
    <property type="entry name" value="HCP-like"/>
    <property type="match status" value="1"/>
</dbReference>
<dbReference type="PROSITE" id="PS50005">
    <property type="entry name" value="TPR"/>
    <property type="match status" value="5"/>
</dbReference>
<dbReference type="PROSITE" id="PS50293">
    <property type="entry name" value="TPR_REGION"/>
    <property type="match status" value="1"/>
</dbReference>
<feature type="chain" id="PRO_0000106446" description="Sol locus transcriptional repressor">
    <location>
        <begin position="1"/>
        <end position="318"/>
    </location>
</feature>
<feature type="repeat" description="TPR 1">
    <location>
        <begin position="65"/>
        <end position="98"/>
    </location>
</feature>
<feature type="repeat" description="TPR 2">
    <location>
        <begin position="99"/>
        <end position="132"/>
    </location>
</feature>
<feature type="repeat" description="TPR 3">
    <location>
        <begin position="133"/>
        <end position="166"/>
    </location>
</feature>
<feature type="repeat" description="TPR 4">
    <location>
        <begin position="167"/>
        <end position="199"/>
    </location>
</feature>
<keyword id="KW-0614">Plasmid</keyword>
<keyword id="KW-1185">Reference proteome</keyword>
<keyword id="KW-0677">Repeat</keyword>
<keyword id="KW-0678">Repressor</keyword>
<keyword id="KW-0802">TPR repeat</keyword>
<keyword id="KW-0804">Transcription</keyword>
<keyword id="KW-0805">Transcription regulation</keyword>
<organism>
    <name type="scientific">Clostridium acetobutylicum (strain ATCC 824 / DSM 792 / JCM 1419 / IAM 19013 / LMG 5710 / NBRC 13948 / NRRL B-527 / VKM B-1787 / 2291 / W)</name>
    <dbReference type="NCBI Taxonomy" id="272562"/>
    <lineage>
        <taxon>Bacteria</taxon>
        <taxon>Bacillati</taxon>
        <taxon>Bacillota</taxon>
        <taxon>Clostridia</taxon>
        <taxon>Eubacteriales</taxon>
        <taxon>Clostridiaceae</taxon>
        <taxon>Clostridium</taxon>
    </lineage>
</organism>
<comment type="function">
    <text>Transcriptional repressor of the sol locus (adhE/aad, ctfA, ctfB and adc) genes for butanol and acetone formation.</text>
</comment>